<comment type="function">
    <text evidence="2">Omega-conotoxins act at presynaptic membranes, they bind and block voltage-gated calcium channels (Cav). Reversibly blocks calcium current in the dorsal-root ganglion neurons of the rat (high voltage-activated channels but not low voltage-activated channels). Does not modify the voltage dependency of activation and inactivation.</text>
</comment>
<comment type="subcellular location">
    <subcellularLocation>
        <location evidence="1">Secreted</location>
    </subcellularLocation>
</comment>
<comment type="tissue specificity">
    <text evidence="4">Expressed by the venom duct.</text>
</comment>
<comment type="domain">
    <text evidence="3">The cysteine framework is XVI (C-C-CC).</text>
</comment>
<comment type="PTM">
    <text evidence="3">Contains 2 disulfide bonds.</text>
</comment>
<accession>P0CI41</accession>
<sequence length="13" mass="1330">NCPAGCRSQGCCM</sequence>
<reference key="1">
    <citation type="journal article" date="2010" name="Mol. Phylogenet. Evol.">
        <title>Evolution of Conus peptide toxins: analysis of Conus californicus Reeve, 1844.</title>
        <authorList>
            <person name="Biggs J.S."/>
            <person name="Watkins M."/>
            <person name="Puillandre N."/>
            <person name="Ownby J.P."/>
            <person name="Lopez-Vera E."/>
            <person name="Christensen S."/>
            <person name="Moreno K.J."/>
            <person name="Bernaldez J."/>
            <person name="Licea-Navarro A."/>
            <person name="Corneli P.S."/>
            <person name="Olivera B.M."/>
        </authorList>
    </citation>
    <scope>PROTEIN SEQUENCE</scope>
    <scope>SUBCELLULAR LOCATION</scope>
    <source>
        <tissue>Venom</tissue>
    </source>
</reference>
<reference key="2">
    <citation type="journal article" date="2011" name="Toxicon">
        <title>Electrophysiological characterization of a novel small peptide from the venom of Conus californicus that targets voltage-gated neuronal Ca(2+) channels.</title>
        <authorList>
            <person name="Bernaldez J."/>
            <person name="Lopez O."/>
            <person name="Licea A."/>
            <person name="Salceda E."/>
            <person name="Arellano R.O."/>
            <person name="Vega R."/>
            <person name="Soto E."/>
        </authorList>
    </citation>
    <scope>FUNCTION</scope>
    <scope>TOXIN TARGET</scope>
    <source>
        <tissue>Venom</tissue>
    </source>
</reference>
<organism>
    <name type="scientific">Californiconus californicus</name>
    <name type="common">California cone</name>
    <name type="synonym">Conus californicus</name>
    <dbReference type="NCBI Taxonomy" id="1736779"/>
    <lineage>
        <taxon>Eukaryota</taxon>
        <taxon>Metazoa</taxon>
        <taxon>Spiralia</taxon>
        <taxon>Lophotrochozoa</taxon>
        <taxon>Mollusca</taxon>
        <taxon>Gastropoda</taxon>
        <taxon>Caenogastropoda</taxon>
        <taxon>Neogastropoda</taxon>
        <taxon>Conoidea</taxon>
        <taxon>Conidae</taxon>
        <taxon>Californiconus</taxon>
    </lineage>
</organism>
<proteinExistence type="evidence at protein level"/>
<keyword id="KW-0108">Calcium channel impairing toxin</keyword>
<keyword id="KW-0903">Direct protein sequencing</keyword>
<keyword id="KW-1015">Disulfide bond</keyword>
<keyword id="KW-0872">Ion channel impairing toxin</keyword>
<keyword id="KW-0528">Neurotoxin</keyword>
<keyword id="KW-0638">Presynaptic neurotoxin</keyword>
<keyword id="KW-0964">Secreted</keyword>
<keyword id="KW-0800">Toxin</keyword>
<keyword id="KW-1218">Voltage-gated calcium channel impairing toxin</keyword>
<dbReference type="ConoServer" id="4231">
    <property type="toxin name" value="Cal16.2"/>
</dbReference>
<dbReference type="GO" id="GO:0005576">
    <property type="term" value="C:extracellular region"/>
    <property type="evidence" value="ECO:0007669"/>
    <property type="project" value="UniProtKB-SubCell"/>
</dbReference>
<dbReference type="GO" id="GO:0044231">
    <property type="term" value="C:host cell presynaptic membrane"/>
    <property type="evidence" value="ECO:0007669"/>
    <property type="project" value="UniProtKB-KW"/>
</dbReference>
<dbReference type="GO" id="GO:0005246">
    <property type="term" value="F:calcium channel regulator activity"/>
    <property type="evidence" value="ECO:0007669"/>
    <property type="project" value="UniProtKB-KW"/>
</dbReference>
<dbReference type="GO" id="GO:0090729">
    <property type="term" value="F:toxin activity"/>
    <property type="evidence" value="ECO:0007669"/>
    <property type="project" value="UniProtKB-KW"/>
</dbReference>
<feature type="peptide" id="PRO_0000402421" description="Omega-conotoxin Cl16a" evidence="1">
    <location>
        <begin position="1"/>
        <end position="13"/>
    </location>
</feature>
<evidence type="ECO:0000269" key="1">
    <source>
    </source>
</evidence>
<evidence type="ECO:0000269" key="2">
    <source>
    </source>
</evidence>
<evidence type="ECO:0000305" key="3"/>
<evidence type="ECO:0000305" key="4">
    <source>
    </source>
</evidence>
<protein>
    <recommendedName>
        <fullName>Omega-conotoxin Cl16a</fullName>
    </recommendedName>
    <alternativeName>
        <fullName>Conotoxin CalTx</fullName>
    </alternativeName>
    <alternativeName>
        <fullName>Omega-conotoxin Cl15a</fullName>
    </alternativeName>
</protein>
<name>CUG6A_CONCL</name>